<gene>
    <name evidence="1" type="primary">speA</name>
    <name type="ordered locus">RB3708</name>
</gene>
<name>SPEA_RHOBA</name>
<reference key="1">
    <citation type="journal article" date="2003" name="Proc. Natl. Acad. Sci. U.S.A.">
        <title>Complete genome sequence of the marine planctomycete Pirellula sp. strain 1.</title>
        <authorList>
            <person name="Gloeckner F.O."/>
            <person name="Kube M."/>
            <person name="Bauer M."/>
            <person name="Teeling H."/>
            <person name="Lombardot T."/>
            <person name="Ludwig W."/>
            <person name="Gade D."/>
            <person name="Beck A."/>
            <person name="Borzym K."/>
            <person name="Heitmann K."/>
            <person name="Rabus R."/>
            <person name="Schlesner H."/>
            <person name="Amann R."/>
            <person name="Reinhardt R."/>
        </authorList>
    </citation>
    <scope>NUCLEOTIDE SEQUENCE [LARGE SCALE GENOMIC DNA]</scope>
    <source>
        <strain>DSM 10527 / NCIMB 13988 / SH1</strain>
    </source>
</reference>
<proteinExistence type="inferred from homology"/>
<feature type="chain" id="PRO_0000149974" description="Biosynthetic arginine decarboxylase">
    <location>
        <begin position="1"/>
        <end position="668"/>
    </location>
</feature>
<feature type="binding site" evidence="1">
    <location>
        <begin position="286"/>
        <end position="296"/>
    </location>
    <ligand>
        <name>substrate</name>
    </ligand>
</feature>
<feature type="modified residue" description="N6-(pyridoxal phosphate)lysine" evidence="1">
    <location>
        <position position="105"/>
    </location>
</feature>
<protein>
    <recommendedName>
        <fullName evidence="1">Biosynthetic arginine decarboxylase</fullName>
        <shortName evidence="1">ADC</shortName>
        <ecNumber evidence="1">4.1.1.19</ecNumber>
    </recommendedName>
</protein>
<accession>Q7UTS2</accession>
<evidence type="ECO:0000255" key="1">
    <source>
        <dbReference type="HAMAP-Rule" id="MF_01417"/>
    </source>
</evidence>
<organism>
    <name type="scientific">Rhodopirellula baltica (strain DSM 10527 / NCIMB 13988 / SH1)</name>
    <dbReference type="NCBI Taxonomy" id="243090"/>
    <lineage>
        <taxon>Bacteria</taxon>
        <taxon>Pseudomonadati</taxon>
        <taxon>Planctomycetota</taxon>
        <taxon>Planctomycetia</taxon>
        <taxon>Pirellulales</taxon>
        <taxon>Pirellulaceae</taxon>
        <taxon>Rhodopirellula</taxon>
    </lineage>
</organism>
<keyword id="KW-0210">Decarboxylase</keyword>
<keyword id="KW-0456">Lyase</keyword>
<keyword id="KW-0460">Magnesium</keyword>
<keyword id="KW-0479">Metal-binding</keyword>
<keyword id="KW-0620">Polyamine biosynthesis</keyword>
<keyword id="KW-0663">Pyridoxal phosphate</keyword>
<keyword id="KW-1185">Reference proteome</keyword>
<keyword id="KW-0745">Spermidine biosynthesis</keyword>
<comment type="function">
    <text evidence="1">Catalyzes the biosynthesis of agmatine from arginine.</text>
</comment>
<comment type="catalytic activity">
    <reaction evidence="1">
        <text>L-arginine + H(+) = agmatine + CO2</text>
        <dbReference type="Rhea" id="RHEA:17641"/>
        <dbReference type="ChEBI" id="CHEBI:15378"/>
        <dbReference type="ChEBI" id="CHEBI:16526"/>
        <dbReference type="ChEBI" id="CHEBI:32682"/>
        <dbReference type="ChEBI" id="CHEBI:58145"/>
        <dbReference type="EC" id="4.1.1.19"/>
    </reaction>
</comment>
<comment type="cofactor">
    <cofactor evidence="1">
        <name>Mg(2+)</name>
        <dbReference type="ChEBI" id="CHEBI:18420"/>
    </cofactor>
</comment>
<comment type="cofactor">
    <cofactor evidence="1">
        <name>pyridoxal 5'-phosphate</name>
        <dbReference type="ChEBI" id="CHEBI:597326"/>
    </cofactor>
</comment>
<comment type="similarity">
    <text evidence="1">Belongs to the Orn/Lys/Arg decarboxylase class-II family. SpeA subfamily.</text>
</comment>
<dbReference type="EC" id="4.1.1.19" evidence="1"/>
<dbReference type="EMBL" id="BX294139">
    <property type="protein sequence ID" value="CAD73363.1"/>
    <property type="molecule type" value="Genomic_DNA"/>
</dbReference>
<dbReference type="RefSeq" id="NP_865678.1">
    <property type="nucleotide sequence ID" value="NC_005027.1"/>
</dbReference>
<dbReference type="RefSeq" id="WP_011119511.1">
    <property type="nucleotide sequence ID" value="NC_005027.1"/>
</dbReference>
<dbReference type="SMR" id="Q7UTS2"/>
<dbReference type="FunCoup" id="Q7UTS2">
    <property type="interactions" value="116"/>
</dbReference>
<dbReference type="STRING" id="243090.RB3708"/>
<dbReference type="EnsemblBacteria" id="CAD73363">
    <property type="protein sequence ID" value="CAD73363"/>
    <property type="gene ID" value="RB3708"/>
</dbReference>
<dbReference type="KEGG" id="rba:RB3708"/>
<dbReference type="PATRIC" id="fig|243090.15.peg.1723"/>
<dbReference type="eggNOG" id="COG1166">
    <property type="taxonomic scope" value="Bacteria"/>
</dbReference>
<dbReference type="HOGENOM" id="CLU_027243_1_0_0"/>
<dbReference type="InParanoid" id="Q7UTS2"/>
<dbReference type="OrthoDB" id="9802658at2"/>
<dbReference type="Proteomes" id="UP000001025">
    <property type="component" value="Chromosome"/>
</dbReference>
<dbReference type="GO" id="GO:0008792">
    <property type="term" value="F:arginine decarboxylase activity"/>
    <property type="evidence" value="ECO:0007669"/>
    <property type="project" value="UniProtKB-UniRule"/>
</dbReference>
<dbReference type="GO" id="GO:0046872">
    <property type="term" value="F:metal ion binding"/>
    <property type="evidence" value="ECO:0007669"/>
    <property type="project" value="UniProtKB-KW"/>
</dbReference>
<dbReference type="GO" id="GO:0006527">
    <property type="term" value="P:arginine catabolic process"/>
    <property type="evidence" value="ECO:0007669"/>
    <property type="project" value="InterPro"/>
</dbReference>
<dbReference type="GO" id="GO:0008295">
    <property type="term" value="P:spermidine biosynthetic process"/>
    <property type="evidence" value="ECO:0007669"/>
    <property type="project" value="UniProtKB-UniRule"/>
</dbReference>
<dbReference type="CDD" id="cd06830">
    <property type="entry name" value="PLPDE_III_ADC"/>
    <property type="match status" value="1"/>
</dbReference>
<dbReference type="FunFam" id="2.40.37.10:FF:000062">
    <property type="match status" value="1"/>
</dbReference>
<dbReference type="FunFam" id="3.20.20.10:FF:000001">
    <property type="entry name" value="Biosynthetic arginine decarboxylase"/>
    <property type="match status" value="1"/>
</dbReference>
<dbReference type="Gene3D" id="1.10.287.3440">
    <property type="match status" value="1"/>
</dbReference>
<dbReference type="Gene3D" id="3.20.20.10">
    <property type="entry name" value="Alanine racemase"/>
    <property type="match status" value="1"/>
</dbReference>
<dbReference type="Gene3D" id="2.40.37.10">
    <property type="entry name" value="Lyase, Ornithine Decarboxylase, Chain A, domain 1"/>
    <property type="match status" value="1"/>
</dbReference>
<dbReference type="HAMAP" id="MF_01417">
    <property type="entry name" value="SpeA"/>
    <property type="match status" value="1"/>
</dbReference>
<dbReference type="InterPro" id="IPR009006">
    <property type="entry name" value="Ala_racemase/Decarboxylase_C"/>
</dbReference>
<dbReference type="InterPro" id="IPR040634">
    <property type="entry name" value="Arg_decarb_HB"/>
</dbReference>
<dbReference type="InterPro" id="IPR041128">
    <property type="entry name" value="Arg_decarbox_C"/>
</dbReference>
<dbReference type="InterPro" id="IPR002985">
    <property type="entry name" value="Arg_decrbxlase"/>
</dbReference>
<dbReference type="InterPro" id="IPR022657">
    <property type="entry name" value="De-COase2_CS"/>
</dbReference>
<dbReference type="InterPro" id="IPR022644">
    <property type="entry name" value="De-COase2_N"/>
</dbReference>
<dbReference type="InterPro" id="IPR022653">
    <property type="entry name" value="De-COase2_pyr-phos_BS"/>
</dbReference>
<dbReference type="InterPro" id="IPR000183">
    <property type="entry name" value="Orn/DAP/Arg_de-COase"/>
</dbReference>
<dbReference type="InterPro" id="IPR029066">
    <property type="entry name" value="PLP-binding_barrel"/>
</dbReference>
<dbReference type="NCBIfam" id="NF003763">
    <property type="entry name" value="PRK05354.1"/>
    <property type="match status" value="1"/>
</dbReference>
<dbReference type="PANTHER" id="PTHR43295">
    <property type="entry name" value="ARGININE DECARBOXYLASE"/>
    <property type="match status" value="1"/>
</dbReference>
<dbReference type="PANTHER" id="PTHR43295:SF9">
    <property type="entry name" value="BIOSYNTHETIC ARGININE DECARBOXYLASE"/>
    <property type="match status" value="1"/>
</dbReference>
<dbReference type="Pfam" id="PF17810">
    <property type="entry name" value="Arg_decarb_HB"/>
    <property type="match status" value="1"/>
</dbReference>
<dbReference type="Pfam" id="PF17944">
    <property type="entry name" value="Arg_decarbox_C"/>
    <property type="match status" value="1"/>
</dbReference>
<dbReference type="Pfam" id="PF02784">
    <property type="entry name" value="Orn_Arg_deC_N"/>
    <property type="match status" value="1"/>
</dbReference>
<dbReference type="PIRSF" id="PIRSF001336">
    <property type="entry name" value="Arg_decrbxlase"/>
    <property type="match status" value="1"/>
</dbReference>
<dbReference type="PRINTS" id="PR01180">
    <property type="entry name" value="ARGDCRBXLASE"/>
</dbReference>
<dbReference type="PRINTS" id="PR01179">
    <property type="entry name" value="ODADCRBXLASE"/>
</dbReference>
<dbReference type="SUPFAM" id="SSF50621">
    <property type="entry name" value="Alanine racemase C-terminal domain-like"/>
    <property type="match status" value="1"/>
</dbReference>
<dbReference type="SUPFAM" id="SSF51419">
    <property type="entry name" value="PLP-binding barrel"/>
    <property type="match status" value="1"/>
</dbReference>
<dbReference type="PROSITE" id="PS00878">
    <property type="entry name" value="ODR_DC_2_1"/>
    <property type="match status" value="1"/>
</dbReference>
<dbReference type="PROSITE" id="PS00879">
    <property type="entry name" value="ODR_DC_2_2"/>
    <property type="match status" value="1"/>
</dbReference>
<sequence length="668" mass="74081">MSSVLDSKWTRSDASKTYDIDRWGAGYFSISDAGTVLVSPDRDPSQSIDLKELVDRLGQRNLDLPILLRFNGILRDRLRELDRCFKNAIHDHKYQSRYRCVFPIKVNQQREVVQQIVSEGARLGFGIEAGSKPELVAAVAMGDANVPIVCNGFKDEEFIRLALLAQRLGRNVLPVVEKVSELDLILDVAKDIGVRPTIGMRVKLATRGSGRWQASGGYRSKFGLTVAELLAQLDRLIAMDMGDCLQLLHFHVGSQIGNIRQLKSAILEAARIYVDLVRRGAGMRYLDVGGGLGVDYDGSRSDSESSMNYTMQEYANDVVYHTQTVCDEAGVPHPELISESGRAVAAHHSVLVMETLGVTSQGVANLPCWAKVEGEPVSPDHGGIEMDSVGAIETSEMEGPPESYEQPVHDLWVGYVNMTQANMMETFHDAQVALDLCMNLFSGGYLPLEQRVAAENLYFAICHRVRELAESMKERPDDLKHLDRMLSDIYFANFSLFQSMPDSWAIDQLFPIMPIHRLLEKPSRHAVLGDITCDSDGKVDAFVCGGGRQRTLMLHPLKSGEPYQLAVFMVGAYQEILGDLHNLFGDTHAVHVDIEDGVTKVRSIVKGDTVSEVLGYVQYEDRELIENLQESVESAIGNGHIDHQQAGETVAAYERALSGYTYLSTRTK</sequence>